<protein>
    <recommendedName>
        <fullName>Sister chromatid cohesion protein PDS5 homolog B</fullName>
    </recommendedName>
    <alternativeName>
        <fullName>Androgen-induced proliferation inhibitor</fullName>
    </alternativeName>
    <alternativeName>
        <fullName>Androgen-induced prostate proliferative shutoff-associated protein AS3</fullName>
    </alternativeName>
</protein>
<evidence type="ECO:0000250" key="1"/>
<evidence type="ECO:0000250" key="2">
    <source>
        <dbReference type="UniProtKB" id="Q6TRW4"/>
    </source>
</evidence>
<evidence type="ECO:0000250" key="3">
    <source>
        <dbReference type="UniProtKB" id="Q9NTI5"/>
    </source>
</evidence>
<evidence type="ECO:0000255" key="4"/>
<evidence type="ECO:0000256" key="5">
    <source>
        <dbReference type="SAM" id="MobiDB-lite"/>
    </source>
</evidence>
<evidence type="ECO:0000269" key="6">
    <source>
    </source>
</evidence>
<evidence type="ECO:0000269" key="7">
    <source ref="1"/>
</evidence>
<evidence type="ECO:0000303" key="8">
    <source>
    </source>
</evidence>
<evidence type="ECO:0000303" key="9">
    <source ref="1"/>
</evidence>
<evidence type="ECO:0000305" key="10"/>
<evidence type="ECO:0000312" key="11">
    <source>
        <dbReference type="EMBL" id="AAH96539.1"/>
    </source>
</evidence>
<evidence type="ECO:0000312" key="12">
    <source>
        <dbReference type="EMBL" id="AAM52216.1"/>
    </source>
</evidence>
<evidence type="ECO:0000312" key="13">
    <source>
        <dbReference type="EMBL" id="BAC31031.1"/>
    </source>
</evidence>
<evidence type="ECO:0000312" key="14">
    <source>
        <dbReference type="EMBL" id="BAC32242.1"/>
    </source>
</evidence>
<evidence type="ECO:0000312" key="15">
    <source>
        <dbReference type="EMBL" id="BAC33427.1"/>
    </source>
</evidence>
<evidence type="ECO:0000312" key="16">
    <source>
        <dbReference type="EMBL" id="BAC65696.1"/>
    </source>
</evidence>
<evidence type="ECO:0000312" key="17">
    <source>
        <dbReference type="EMBL" id="BAE37943.1"/>
    </source>
</evidence>
<evidence type="ECO:0007744" key="18">
    <source>
    </source>
</evidence>
<evidence type="ECO:0007744" key="19">
    <source>
    </source>
</evidence>
<evidence type="ECO:0007744" key="20">
    <source>
    </source>
</evidence>
<evidence type="ECO:0007744" key="21">
    <source>
    </source>
</evidence>
<evidence type="ECO:0007744" key="22">
    <source>
    </source>
</evidence>
<feature type="chain" id="PRO_0000287425" description="Sister chromatid cohesion protein PDS5 homolog B">
    <location>
        <begin position="1"/>
        <end position="1446"/>
    </location>
</feature>
<feature type="repeat" description="HEAT" evidence="4">
    <location>
        <begin position="383"/>
        <end position="419"/>
    </location>
</feature>
<feature type="DNA-binding region" description="A.T hook 1" evidence="4">
    <location>
        <begin position="1247"/>
        <end position="1259"/>
    </location>
</feature>
<feature type="DNA-binding region" description="A.T hook 2" evidence="4">
    <location>
        <begin position="1285"/>
        <end position="1297"/>
    </location>
</feature>
<feature type="DNA-binding region" description="A.T hook 3" evidence="4">
    <location>
        <begin position="1370"/>
        <end position="1382"/>
    </location>
</feature>
<feature type="region of interest" description="Disordered" evidence="5">
    <location>
        <begin position="1137"/>
        <end position="1446"/>
    </location>
</feature>
<feature type="compositionally biased region" description="Polar residues" evidence="5">
    <location>
        <begin position="1137"/>
        <end position="1155"/>
    </location>
</feature>
<feature type="compositionally biased region" description="Low complexity" evidence="5">
    <location>
        <begin position="1156"/>
        <end position="1167"/>
    </location>
</feature>
<feature type="compositionally biased region" description="Basic and acidic residues" evidence="5">
    <location>
        <begin position="1172"/>
        <end position="1184"/>
    </location>
</feature>
<feature type="compositionally biased region" description="Basic and acidic residues" evidence="5">
    <location>
        <begin position="1196"/>
        <end position="1212"/>
    </location>
</feature>
<feature type="compositionally biased region" description="Basic and acidic residues" evidence="5">
    <location>
        <begin position="1223"/>
        <end position="1241"/>
    </location>
</feature>
<feature type="compositionally biased region" description="Basic residues" evidence="5">
    <location>
        <begin position="1243"/>
        <end position="1252"/>
    </location>
</feature>
<feature type="compositionally biased region" description="Basic and acidic residues" evidence="5">
    <location>
        <begin position="1263"/>
        <end position="1272"/>
    </location>
</feature>
<feature type="compositionally biased region" description="Basic residues" evidence="5">
    <location>
        <begin position="1308"/>
        <end position="1317"/>
    </location>
</feature>
<feature type="compositionally biased region" description="Basic residues" evidence="5">
    <location>
        <begin position="1339"/>
        <end position="1351"/>
    </location>
</feature>
<feature type="compositionally biased region" description="Polar residues" evidence="5">
    <location>
        <begin position="1353"/>
        <end position="1370"/>
    </location>
</feature>
<feature type="compositionally biased region" description="Acidic residues" evidence="5">
    <location>
        <begin position="1421"/>
        <end position="1431"/>
    </location>
</feature>
<feature type="compositionally biased region" description="Basic residues" evidence="5">
    <location>
        <begin position="1436"/>
        <end position="1446"/>
    </location>
</feature>
<feature type="modified residue" description="N6-acetyllysine" evidence="22">
    <location>
        <position position="1136"/>
    </location>
</feature>
<feature type="modified residue" description="Phosphoserine" evidence="3">
    <location>
        <position position="1140"/>
    </location>
</feature>
<feature type="modified residue" description="Phosphoserine" evidence="21">
    <location>
        <position position="1162"/>
    </location>
</feature>
<feature type="modified residue" description="Phosphoserine" evidence="20 21">
    <location>
        <position position="1166"/>
    </location>
</feature>
<feature type="modified residue" description="Phosphoserine" evidence="21">
    <location>
        <position position="1176"/>
    </location>
</feature>
<feature type="modified residue" description="Phosphoserine" evidence="21">
    <location>
        <position position="1182"/>
    </location>
</feature>
<feature type="modified residue" description="Phosphoserine" evidence="3">
    <location>
        <position position="1191"/>
    </location>
</feature>
<feature type="modified residue" description="Phosphothreonine" evidence="20">
    <location>
        <position position="1253"/>
    </location>
</feature>
<feature type="modified residue" description="Phosphoserine" evidence="21">
    <location>
        <position position="1255"/>
    </location>
</feature>
<feature type="modified residue" description="Phosphoserine" evidence="20 21">
    <location>
        <position position="1257"/>
    </location>
</feature>
<feature type="modified residue" description="Phosphoserine" evidence="20 21">
    <location>
        <position position="1281"/>
    </location>
</feature>
<feature type="modified residue" description="Phosphoserine" evidence="18 19 20 21">
    <location>
        <position position="1356"/>
    </location>
</feature>
<feature type="modified residue" description="Phosphoserine" evidence="21">
    <location>
        <position position="1364"/>
    </location>
</feature>
<feature type="modified residue" description="Phosphothreonine" evidence="3">
    <location>
        <position position="1365"/>
    </location>
</feature>
<feature type="modified residue" description="Phosphoserine" evidence="21">
    <location>
        <position position="1367"/>
    </location>
</feature>
<feature type="modified residue" description="Phosphothreonine" evidence="21">
    <location>
        <position position="1368"/>
    </location>
</feature>
<feature type="modified residue" description="Phosphoserine" evidence="3">
    <location>
        <position position="1381"/>
    </location>
</feature>
<feature type="modified residue" description="Phosphoserine" evidence="21">
    <location>
        <position position="1415"/>
    </location>
</feature>
<feature type="modified residue" description="Phosphoserine" evidence="21">
    <location>
        <position position="1418"/>
    </location>
</feature>
<feature type="splice variant" id="VSP_052403" description="In isoform 2." evidence="8">
    <location>
        <begin position="1"/>
        <end position="529"/>
    </location>
</feature>
<feature type="splice variant" id="VSP_052404" description="In isoform 3." evidence="8">
    <original>L</original>
    <variation>LVR</variation>
    <location>
        <position position="1206"/>
    </location>
</feature>
<feature type="splice variant" id="VSP_052405" description="In isoform 2." evidence="8">
    <original>SELEKPRSRKKAPVTDPEEKLGMD</original>
    <variation>VRVRCLVGRVMRLLIVIVLVIFAL</variation>
    <location>
        <begin position="1207"/>
        <end position="1230"/>
    </location>
</feature>
<feature type="splice variant" id="VSP_052406" description="In isoform 2." evidence="8">
    <location>
        <begin position="1231"/>
        <end position="1446"/>
    </location>
</feature>
<feature type="sequence conflict" description="In Ref. 1; AAM52216." evidence="10" ref="1">
    <original>W</original>
    <variation>R</variation>
    <location>
        <position position="496"/>
    </location>
</feature>
<feature type="sequence conflict" description="In Ref. 1; AAM52216." evidence="10" ref="1">
    <original>I</original>
    <variation>T</variation>
    <location>
        <position position="966"/>
    </location>
</feature>
<feature type="sequence conflict" description="In Ref. 1; AAM52216." evidence="10" ref="1">
    <original>A</original>
    <variation>S</variation>
    <location>
        <position position="978"/>
    </location>
</feature>
<comment type="function">
    <text evidence="1">Regulator of sister chromatid cohesion in mitosis which may stabilize cohesin complex association with chromatin. May couple sister chromatid cohesion during mitosis to DNA replication. Cohesion ensures that chromosome partitioning is accurate in both meiotic and mitotic cells and plays an important role in DNA repair. Plays a role in androgen-induced proliferative arrest in prostate cells (By similarity).</text>
</comment>
<comment type="subunit">
    <text evidence="1">Interacts with the cohesin complex. Interacts with RAD21; the interaction is direct. Interacts with WAPL (via FGF motifs) or CDCA5 (via the FGF motif); the interaction is direct, cohesin-dependent and competitive (By similarity).</text>
</comment>
<comment type="subcellular location">
    <subcellularLocation>
        <location evidence="2">Nucleus</location>
    </subcellularLocation>
</comment>
<comment type="alternative products">
    <event type="alternative splicing"/>
    <isoform>
        <id>Q4VA53-1</id>
        <name evidence="7">1</name>
        <sequence type="displayed"/>
    </isoform>
    <isoform>
        <id>Q4VA53-2</id>
        <name evidence="6">2</name>
        <sequence type="described" ref="VSP_052403 VSP_052405 VSP_052406"/>
    </isoform>
    <isoform>
        <id>Q4VA53-3</id>
        <name evidence="6">3</name>
        <sequence type="described" ref="VSP_052404"/>
    </isoform>
</comment>
<comment type="tissue specificity">
    <text evidence="7">Expressed in prostate.</text>
</comment>
<comment type="similarity">
    <text evidence="10">Belongs to the PDS5 family.</text>
</comment>
<accession>Q4VA53</accession>
<accession>Q3TNZ4</accession>
<accession>Q7TSS4</accession>
<accession>Q80TM8</accession>
<accession>Q8BJ18</accession>
<accession>Q8BLH6</accession>
<accession>Q8BX77</accession>
<proteinExistence type="evidence at protein level"/>
<dbReference type="EMBL" id="AY102267">
    <property type="protein sequence ID" value="AAM52216.1"/>
    <property type="molecule type" value="mRNA"/>
</dbReference>
<dbReference type="EMBL" id="AK041682">
    <property type="protein sequence ID" value="BAC31031.1"/>
    <property type="molecule type" value="mRNA"/>
</dbReference>
<dbReference type="EMBL" id="AK045159">
    <property type="protein sequence ID" value="BAC32242.1"/>
    <property type="molecule type" value="mRNA"/>
</dbReference>
<dbReference type="EMBL" id="AK048706">
    <property type="protein sequence ID" value="BAC33427.1"/>
    <property type="molecule type" value="mRNA"/>
</dbReference>
<dbReference type="EMBL" id="AK164853">
    <property type="protein sequence ID" value="BAE37943.1"/>
    <property type="molecule type" value="mRNA"/>
</dbReference>
<dbReference type="EMBL" id="BC096539">
    <property type="protein sequence ID" value="AAH96539.1"/>
    <property type="molecule type" value="mRNA"/>
</dbReference>
<dbReference type="EMBL" id="AK122414">
    <property type="protein sequence ID" value="BAC65696.1"/>
    <property type="molecule type" value="mRNA"/>
</dbReference>
<dbReference type="CCDS" id="CCDS39412.1">
    <molecule id="Q4VA53-1"/>
</dbReference>
<dbReference type="CCDS" id="CCDS85012.1">
    <molecule id="Q4VA53-3"/>
</dbReference>
<dbReference type="RefSeq" id="NP_001333432.1">
    <molecule id="Q4VA53-3"/>
    <property type="nucleotide sequence ID" value="NM_001346503.2"/>
</dbReference>
<dbReference type="RefSeq" id="NP_780519.3">
    <molecule id="Q4VA53-1"/>
    <property type="nucleotide sequence ID" value="NM_175310.6"/>
</dbReference>
<dbReference type="SMR" id="Q4VA53"/>
<dbReference type="BioGRID" id="221515">
    <property type="interactions" value="8"/>
</dbReference>
<dbReference type="FunCoup" id="Q4VA53">
    <property type="interactions" value="4418"/>
</dbReference>
<dbReference type="IntAct" id="Q4VA53">
    <property type="interactions" value="1"/>
</dbReference>
<dbReference type="MINT" id="Q4VA53"/>
<dbReference type="STRING" id="10090.ENSMUSP00000144572"/>
<dbReference type="GlyConnect" id="2716">
    <property type="glycosylation" value="3 N-Linked glycans (1 site)"/>
</dbReference>
<dbReference type="GlyCosmos" id="Q4VA53">
    <property type="glycosylation" value="1 site, 3 glycans"/>
</dbReference>
<dbReference type="GlyGen" id="Q4VA53">
    <property type="glycosylation" value="2 sites, 3 N-linked glycans (1 site), 1 O-linked glycan (1 site)"/>
</dbReference>
<dbReference type="iPTMnet" id="Q4VA53"/>
<dbReference type="PhosphoSitePlus" id="Q4VA53"/>
<dbReference type="jPOST" id="Q4VA53"/>
<dbReference type="PaxDb" id="10090-ENSMUSP00000016569"/>
<dbReference type="PeptideAtlas" id="Q4VA53"/>
<dbReference type="ProteomicsDB" id="288092">
    <molecule id="Q4VA53-1"/>
</dbReference>
<dbReference type="ProteomicsDB" id="288093">
    <molecule id="Q4VA53-2"/>
</dbReference>
<dbReference type="ProteomicsDB" id="288094">
    <molecule id="Q4VA53-3"/>
</dbReference>
<dbReference type="Pumba" id="Q4VA53"/>
<dbReference type="Antibodypedia" id="22916">
    <property type="antibodies" value="171 antibodies from 29 providers"/>
</dbReference>
<dbReference type="DNASU" id="100710"/>
<dbReference type="Ensembl" id="ENSMUST00000016569.11">
    <molecule id="Q4VA53-1"/>
    <property type="protein sequence ID" value="ENSMUSP00000016569.5"/>
    <property type="gene ID" value="ENSMUSG00000034021.16"/>
</dbReference>
<dbReference type="Ensembl" id="ENSMUST00000110486.2">
    <molecule id="Q4VA53-2"/>
    <property type="protein sequence ID" value="ENSMUSP00000106112.2"/>
    <property type="gene ID" value="ENSMUSG00000034021.16"/>
</dbReference>
<dbReference type="Ensembl" id="ENSMUST00000202170.4">
    <molecule id="Q4VA53-3"/>
    <property type="protein sequence ID" value="ENSMUSP00000144572.2"/>
    <property type="gene ID" value="ENSMUSG00000034021.16"/>
</dbReference>
<dbReference type="GeneID" id="100710"/>
<dbReference type="KEGG" id="mmu:100710"/>
<dbReference type="UCSC" id="uc009auh.2">
    <molecule id="Q4VA53-1"/>
    <property type="organism name" value="mouse"/>
</dbReference>
<dbReference type="UCSC" id="uc009aui.1">
    <molecule id="Q4VA53-2"/>
    <property type="organism name" value="mouse"/>
</dbReference>
<dbReference type="UCSC" id="uc009auj.2">
    <molecule id="Q4VA53-3"/>
    <property type="organism name" value="mouse"/>
</dbReference>
<dbReference type="AGR" id="MGI:2140945"/>
<dbReference type="CTD" id="23047"/>
<dbReference type="MGI" id="MGI:2140945">
    <property type="gene designation" value="Pds5b"/>
</dbReference>
<dbReference type="VEuPathDB" id="HostDB:ENSMUSG00000034021"/>
<dbReference type="eggNOG" id="KOG1525">
    <property type="taxonomic scope" value="Eukaryota"/>
</dbReference>
<dbReference type="GeneTree" id="ENSGT00940000157257"/>
<dbReference type="HOGENOM" id="CLU_004041_0_0_1"/>
<dbReference type="InParanoid" id="Q4VA53"/>
<dbReference type="OMA" id="YPPAYNM"/>
<dbReference type="OrthoDB" id="200660at2759"/>
<dbReference type="PhylomeDB" id="Q4VA53"/>
<dbReference type="TreeFam" id="TF106415"/>
<dbReference type="Reactome" id="R-MMU-2467813">
    <property type="pathway name" value="Separation of Sister Chromatids"/>
</dbReference>
<dbReference type="Reactome" id="R-MMU-2468052">
    <property type="pathway name" value="Establishment of Sister Chromatid Cohesion"/>
</dbReference>
<dbReference type="Reactome" id="R-MMU-2470946">
    <property type="pathway name" value="Cohesin Loading onto Chromatin"/>
</dbReference>
<dbReference type="Reactome" id="R-MMU-2500257">
    <property type="pathway name" value="Resolution of Sister Chromatid Cohesion"/>
</dbReference>
<dbReference type="BioGRID-ORCS" id="100710">
    <property type="hits" value="9 hits in 76 CRISPR screens"/>
</dbReference>
<dbReference type="ChiTaRS" id="Pds5b">
    <property type="organism name" value="mouse"/>
</dbReference>
<dbReference type="PRO" id="PR:Q4VA53"/>
<dbReference type="Proteomes" id="UP000000589">
    <property type="component" value="Chromosome 5"/>
</dbReference>
<dbReference type="RNAct" id="Q4VA53">
    <property type="molecule type" value="protein"/>
</dbReference>
<dbReference type="Bgee" id="ENSMUSG00000034021">
    <property type="expression patterns" value="Expressed in renal medulla interstitium and 249 other cell types or tissues"/>
</dbReference>
<dbReference type="ExpressionAtlas" id="Q4VA53">
    <property type="expression patterns" value="baseline and differential"/>
</dbReference>
<dbReference type="GO" id="GO:0005634">
    <property type="term" value="C:nucleus"/>
    <property type="evidence" value="ECO:0000250"/>
    <property type="project" value="UniProtKB"/>
</dbReference>
<dbReference type="GO" id="GO:0003677">
    <property type="term" value="F:DNA binding"/>
    <property type="evidence" value="ECO:0000266"/>
    <property type="project" value="MGI"/>
</dbReference>
<dbReference type="GO" id="GO:0051301">
    <property type="term" value="P:cell division"/>
    <property type="evidence" value="ECO:0007669"/>
    <property type="project" value="UniProtKB-KW"/>
</dbReference>
<dbReference type="GO" id="GO:0002088">
    <property type="term" value="P:lens development in camera-type eye"/>
    <property type="evidence" value="ECO:0000315"/>
    <property type="project" value="MGI"/>
</dbReference>
<dbReference type="GO" id="GO:0007064">
    <property type="term" value="P:mitotic sister chromatid cohesion"/>
    <property type="evidence" value="ECO:0000250"/>
    <property type="project" value="UniProtKB"/>
</dbReference>
<dbReference type="GO" id="GO:0008285">
    <property type="term" value="P:negative regulation of cell population proliferation"/>
    <property type="evidence" value="ECO:0000250"/>
    <property type="project" value="UniProtKB"/>
</dbReference>
<dbReference type="GO" id="GO:0042127">
    <property type="term" value="P:regulation of cell population proliferation"/>
    <property type="evidence" value="ECO:0000266"/>
    <property type="project" value="MGI"/>
</dbReference>
<dbReference type="CDD" id="cd19953">
    <property type="entry name" value="PDS5"/>
    <property type="match status" value="1"/>
</dbReference>
<dbReference type="FunFam" id="1.25.10.10:FF:001146">
    <property type="entry name" value="PDS5 cohesin associated factor B"/>
    <property type="match status" value="1"/>
</dbReference>
<dbReference type="FunFam" id="1.25.10.10:FF:000064">
    <property type="entry name" value="Sister chromatid cohesion protein PDS5 homolog A"/>
    <property type="match status" value="1"/>
</dbReference>
<dbReference type="Gene3D" id="1.25.10.10">
    <property type="entry name" value="Leucine-rich Repeat Variant"/>
    <property type="match status" value="2"/>
</dbReference>
<dbReference type="InterPro" id="IPR011989">
    <property type="entry name" value="ARM-like"/>
</dbReference>
<dbReference type="InterPro" id="IPR016024">
    <property type="entry name" value="ARM-type_fold"/>
</dbReference>
<dbReference type="InterPro" id="IPR039776">
    <property type="entry name" value="Pds5"/>
</dbReference>
<dbReference type="PANTHER" id="PTHR12663">
    <property type="entry name" value="ANDROGEN INDUCED INHIBITOR OF PROLIFERATION AS3 / PDS5-RELATED"/>
    <property type="match status" value="1"/>
</dbReference>
<dbReference type="PANTHER" id="PTHR12663:SF1">
    <property type="entry name" value="SISTER CHROMATID COHESION PROTEIN PDS5 HOMOLOG B"/>
    <property type="match status" value="1"/>
</dbReference>
<dbReference type="Pfam" id="PF20168">
    <property type="entry name" value="PDS5"/>
    <property type="match status" value="1"/>
</dbReference>
<dbReference type="SUPFAM" id="SSF48371">
    <property type="entry name" value="ARM repeat"/>
    <property type="match status" value="1"/>
</dbReference>
<reference evidence="10 12" key="1">
    <citation type="journal article" date="2002" name="Proc. Annu. Meet. Am. Assoc. Cancer Res.">
        <title>The AS3 proliferative arrest gene has an ancient eukaryotic heritage and shows highly conserved functional domains in mice.</title>
        <authorList>
            <person name="Geck P."/>
            <person name="Maffini M."/>
            <person name="Sonnenschein C."/>
            <person name="Soto A.M."/>
        </authorList>
    </citation>
    <scope>NUCLEOTIDE SEQUENCE [MRNA] (ISOFORM 1)</scope>
    <scope>TISSUE SPECIFICITY</scope>
    <source>
        <strain evidence="12">BALB/cJ</strain>
        <tissue evidence="12">Brain</tissue>
    </source>
</reference>
<reference evidence="10 14" key="2">
    <citation type="journal article" date="2005" name="Science">
        <title>The transcriptional landscape of the mammalian genome.</title>
        <authorList>
            <person name="Carninci P."/>
            <person name="Kasukawa T."/>
            <person name="Katayama S."/>
            <person name="Gough J."/>
            <person name="Frith M.C."/>
            <person name="Maeda N."/>
            <person name="Oyama R."/>
            <person name="Ravasi T."/>
            <person name="Lenhard B."/>
            <person name="Wells C."/>
            <person name="Kodzius R."/>
            <person name="Shimokawa K."/>
            <person name="Bajic V.B."/>
            <person name="Brenner S.E."/>
            <person name="Batalov S."/>
            <person name="Forrest A.R."/>
            <person name="Zavolan M."/>
            <person name="Davis M.J."/>
            <person name="Wilming L.G."/>
            <person name="Aidinis V."/>
            <person name="Allen J.E."/>
            <person name="Ambesi-Impiombato A."/>
            <person name="Apweiler R."/>
            <person name="Aturaliya R.N."/>
            <person name="Bailey T.L."/>
            <person name="Bansal M."/>
            <person name="Baxter L."/>
            <person name="Beisel K.W."/>
            <person name="Bersano T."/>
            <person name="Bono H."/>
            <person name="Chalk A.M."/>
            <person name="Chiu K.P."/>
            <person name="Choudhary V."/>
            <person name="Christoffels A."/>
            <person name="Clutterbuck D.R."/>
            <person name="Crowe M.L."/>
            <person name="Dalla E."/>
            <person name="Dalrymple B.P."/>
            <person name="de Bono B."/>
            <person name="Della Gatta G."/>
            <person name="di Bernardo D."/>
            <person name="Down T."/>
            <person name="Engstrom P."/>
            <person name="Fagiolini M."/>
            <person name="Faulkner G."/>
            <person name="Fletcher C.F."/>
            <person name="Fukushima T."/>
            <person name="Furuno M."/>
            <person name="Futaki S."/>
            <person name="Gariboldi M."/>
            <person name="Georgii-Hemming P."/>
            <person name="Gingeras T.R."/>
            <person name="Gojobori T."/>
            <person name="Green R.E."/>
            <person name="Gustincich S."/>
            <person name="Harbers M."/>
            <person name="Hayashi Y."/>
            <person name="Hensch T.K."/>
            <person name="Hirokawa N."/>
            <person name="Hill D."/>
            <person name="Huminiecki L."/>
            <person name="Iacono M."/>
            <person name="Ikeo K."/>
            <person name="Iwama A."/>
            <person name="Ishikawa T."/>
            <person name="Jakt M."/>
            <person name="Kanapin A."/>
            <person name="Katoh M."/>
            <person name="Kawasawa Y."/>
            <person name="Kelso J."/>
            <person name="Kitamura H."/>
            <person name="Kitano H."/>
            <person name="Kollias G."/>
            <person name="Krishnan S.P."/>
            <person name="Kruger A."/>
            <person name="Kummerfeld S.K."/>
            <person name="Kurochkin I.V."/>
            <person name="Lareau L.F."/>
            <person name="Lazarevic D."/>
            <person name="Lipovich L."/>
            <person name="Liu J."/>
            <person name="Liuni S."/>
            <person name="McWilliam S."/>
            <person name="Madan Babu M."/>
            <person name="Madera M."/>
            <person name="Marchionni L."/>
            <person name="Matsuda H."/>
            <person name="Matsuzawa S."/>
            <person name="Miki H."/>
            <person name="Mignone F."/>
            <person name="Miyake S."/>
            <person name="Morris K."/>
            <person name="Mottagui-Tabar S."/>
            <person name="Mulder N."/>
            <person name="Nakano N."/>
            <person name="Nakauchi H."/>
            <person name="Ng P."/>
            <person name="Nilsson R."/>
            <person name="Nishiguchi S."/>
            <person name="Nishikawa S."/>
            <person name="Nori F."/>
            <person name="Ohara O."/>
            <person name="Okazaki Y."/>
            <person name="Orlando V."/>
            <person name="Pang K.C."/>
            <person name="Pavan W.J."/>
            <person name="Pavesi G."/>
            <person name="Pesole G."/>
            <person name="Petrovsky N."/>
            <person name="Piazza S."/>
            <person name="Reed J."/>
            <person name="Reid J.F."/>
            <person name="Ring B.Z."/>
            <person name="Ringwald M."/>
            <person name="Rost B."/>
            <person name="Ruan Y."/>
            <person name="Salzberg S.L."/>
            <person name="Sandelin A."/>
            <person name="Schneider C."/>
            <person name="Schoenbach C."/>
            <person name="Sekiguchi K."/>
            <person name="Semple C.A."/>
            <person name="Seno S."/>
            <person name="Sessa L."/>
            <person name="Sheng Y."/>
            <person name="Shibata Y."/>
            <person name="Shimada H."/>
            <person name="Shimada K."/>
            <person name="Silva D."/>
            <person name="Sinclair B."/>
            <person name="Sperling S."/>
            <person name="Stupka E."/>
            <person name="Sugiura K."/>
            <person name="Sultana R."/>
            <person name="Takenaka Y."/>
            <person name="Taki K."/>
            <person name="Tammoja K."/>
            <person name="Tan S.L."/>
            <person name="Tang S."/>
            <person name="Taylor M.S."/>
            <person name="Tegner J."/>
            <person name="Teichmann S.A."/>
            <person name="Ueda H.R."/>
            <person name="van Nimwegen E."/>
            <person name="Verardo R."/>
            <person name="Wei C.L."/>
            <person name="Yagi K."/>
            <person name="Yamanishi H."/>
            <person name="Zabarovsky E."/>
            <person name="Zhu S."/>
            <person name="Zimmer A."/>
            <person name="Hide W."/>
            <person name="Bult C."/>
            <person name="Grimmond S.M."/>
            <person name="Teasdale R.D."/>
            <person name="Liu E.T."/>
            <person name="Brusic V."/>
            <person name="Quackenbush J."/>
            <person name="Wahlestedt C."/>
            <person name="Mattick J.S."/>
            <person name="Hume D.A."/>
            <person name="Kai C."/>
            <person name="Sasaki D."/>
            <person name="Tomaru Y."/>
            <person name="Fukuda S."/>
            <person name="Kanamori-Katayama M."/>
            <person name="Suzuki M."/>
            <person name="Aoki J."/>
            <person name="Arakawa T."/>
            <person name="Iida J."/>
            <person name="Imamura K."/>
            <person name="Itoh M."/>
            <person name="Kato T."/>
            <person name="Kawaji H."/>
            <person name="Kawagashira N."/>
            <person name="Kawashima T."/>
            <person name="Kojima M."/>
            <person name="Kondo S."/>
            <person name="Konno H."/>
            <person name="Nakano K."/>
            <person name="Ninomiya N."/>
            <person name="Nishio T."/>
            <person name="Okada M."/>
            <person name="Plessy C."/>
            <person name="Shibata K."/>
            <person name="Shiraki T."/>
            <person name="Suzuki S."/>
            <person name="Tagami M."/>
            <person name="Waki K."/>
            <person name="Watahiki A."/>
            <person name="Okamura-Oho Y."/>
            <person name="Suzuki H."/>
            <person name="Kawai J."/>
            <person name="Hayashizaki Y."/>
        </authorList>
    </citation>
    <scope>NUCLEOTIDE SEQUENCE [LARGE SCALE MRNA] (ISOFORM 2)</scope>
    <scope>NUCLEOTIDE SEQUENCE [LARGE SCALE MRNA] OF 625-1446 (ISOFORM 3)</scope>
    <scope>NUCLEOTIDE SEQUENCE [LARGE SCALE MRNA] OF 1092-1446 (ISOFORM 1)</scope>
    <source>
        <strain evidence="14">C57BL/6J</strain>
        <tissue evidence="15">Cerebellum</tissue>
        <tissue evidence="14">Embryo</tissue>
        <tissue evidence="17">Head</tissue>
        <tissue evidence="13">Thymus</tissue>
    </source>
</reference>
<reference evidence="10 11" key="3">
    <citation type="journal article" date="2004" name="Genome Res.">
        <title>The status, quality, and expansion of the NIH full-length cDNA project: the Mammalian Gene Collection (MGC).</title>
        <authorList>
            <consortium name="The MGC Project Team"/>
        </authorList>
    </citation>
    <scope>NUCLEOTIDE SEQUENCE [LARGE SCALE MRNA] (ISOFORM 1)</scope>
    <source>
        <strain evidence="11">C57BL/6J</strain>
        <tissue evidence="11">Brain</tissue>
    </source>
</reference>
<reference evidence="10 16" key="4">
    <citation type="journal article" date="2003" name="DNA Res.">
        <title>Prediction of the coding sequences of mouse homologues of KIAA gene: II. The complete nucleotide sequences of 400 mouse KIAA-homologous cDNAs identified by screening of terminal sequences of cDNA clones randomly sampled from size-fractionated libraries.</title>
        <authorList>
            <person name="Okazaki N."/>
            <person name="Kikuno R."/>
            <person name="Ohara R."/>
            <person name="Inamoto S."/>
            <person name="Aizawa H."/>
            <person name="Yuasa S."/>
            <person name="Nakajima D."/>
            <person name="Nagase T."/>
            <person name="Ohara O."/>
            <person name="Koga H."/>
        </authorList>
    </citation>
    <scope>NUCLEOTIDE SEQUENCE [LARGE SCALE MRNA] OF 256-1446 (ISOFORM 1)</scope>
    <source>
        <tissue evidence="16">Brain</tissue>
    </source>
</reference>
<reference key="5">
    <citation type="journal article" date="2004" name="Mol. Cell. Proteomics">
        <title>Phosphoproteomic analysis of the developing mouse brain.</title>
        <authorList>
            <person name="Ballif B.A."/>
            <person name="Villen J."/>
            <person name="Beausoleil S.A."/>
            <person name="Schwartz D."/>
            <person name="Gygi S.P."/>
        </authorList>
    </citation>
    <scope>PHOSPHORYLATION [LARGE SCALE ANALYSIS] AT SER-1356</scope>
    <scope>IDENTIFICATION BY MASS SPECTROMETRY [LARGE SCALE ANALYSIS]</scope>
    <source>
        <tissue>Embryonic brain</tissue>
    </source>
</reference>
<reference key="6">
    <citation type="journal article" date="2006" name="Mol. Cell. Proteomics">
        <title>Comprehensive identification of phosphorylation sites in postsynaptic density preparations.</title>
        <authorList>
            <person name="Trinidad J.C."/>
            <person name="Specht C.G."/>
            <person name="Thalhammer A."/>
            <person name="Schoepfer R."/>
            <person name="Burlingame A.L."/>
        </authorList>
    </citation>
    <scope>PHOSPHORYLATION [LARGE SCALE ANALYSIS] AT SER-1356</scope>
    <scope>IDENTIFICATION BY MASS SPECTROMETRY [LARGE SCALE ANALYSIS]</scope>
    <source>
        <tissue>Brain</tissue>
    </source>
</reference>
<reference key="7">
    <citation type="journal article" date="2007" name="Proc. Natl. Acad. Sci. U.S.A.">
        <title>Large-scale phosphorylation analysis of mouse liver.</title>
        <authorList>
            <person name="Villen J."/>
            <person name="Beausoleil S.A."/>
            <person name="Gerber S.A."/>
            <person name="Gygi S.P."/>
        </authorList>
    </citation>
    <scope>PHOSPHORYLATION [LARGE SCALE ANALYSIS] AT SER-1166; THR-1253; SER-1257; SER-1281 AND SER-1356</scope>
    <scope>IDENTIFICATION BY MASS SPECTROMETRY [LARGE SCALE ANALYSIS]</scope>
    <source>
        <tissue>Liver</tissue>
    </source>
</reference>
<reference key="8">
    <citation type="journal article" date="2009" name="Mol. Cell. Proteomics">
        <title>Large scale localization of protein phosphorylation by use of electron capture dissociation mass spectrometry.</title>
        <authorList>
            <person name="Sweet S.M."/>
            <person name="Bailey C.M."/>
            <person name="Cunningham D.L."/>
            <person name="Heath J.K."/>
            <person name="Cooper H.J."/>
        </authorList>
    </citation>
    <scope>IDENTIFICATION BY MASS SPECTROMETRY [LARGE SCALE ANALYSIS]</scope>
    <source>
        <tissue>Embryonic fibroblast</tissue>
    </source>
</reference>
<reference key="9">
    <citation type="journal article" date="2010" name="Cell">
        <title>A tissue-specific atlas of mouse protein phosphorylation and expression.</title>
        <authorList>
            <person name="Huttlin E.L."/>
            <person name="Jedrychowski M.P."/>
            <person name="Elias J.E."/>
            <person name="Goswami T."/>
            <person name="Rad R."/>
            <person name="Beausoleil S.A."/>
            <person name="Villen J."/>
            <person name="Haas W."/>
            <person name="Sowa M.E."/>
            <person name="Gygi S.P."/>
        </authorList>
    </citation>
    <scope>PHOSPHORYLATION [LARGE SCALE ANALYSIS] AT SER-1162; SER-1166; SER-1176; SER-1182; SER-1255; SER-1257; SER-1281; SER-1356; SER-1364; SER-1367; THR-1368; SER-1415 AND SER-1418</scope>
    <scope>IDENTIFICATION BY MASS SPECTROMETRY [LARGE SCALE ANALYSIS]</scope>
    <source>
        <tissue>Brain</tissue>
        <tissue>Brown adipose tissue</tissue>
        <tissue>Heart</tissue>
        <tissue>Kidney</tissue>
        <tissue>Liver</tissue>
        <tissue>Lung</tissue>
        <tissue>Pancreas</tissue>
        <tissue>Spleen</tissue>
        <tissue>Testis</tissue>
    </source>
</reference>
<reference key="10">
    <citation type="journal article" date="2013" name="Mol. Cell">
        <title>SIRT5-mediated lysine desuccinylation impacts diverse metabolic pathways.</title>
        <authorList>
            <person name="Park J."/>
            <person name="Chen Y."/>
            <person name="Tishkoff D.X."/>
            <person name="Peng C."/>
            <person name="Tan M."/>
            <person name="Dai L."/>
            <person name="Xie Z."/>
            <person name="Zhang Y."/>
            <person name="Zwaans B.M."/>
            <person name="Skinner M.E."/>
            <person name="Lombard D.B."/>
            <person name="Zhao Y."/>
        </authorList>
    </citation>
    <scope>ACETYLATION [LARGE SCALE ANALYSIS] AT LYS-1136</scope>
    <scope>IDENTIFICATION BY MASS SPECTROMETRY [LARGE SCALE ANALYSIS]</scope>
    <source>
        <tissue>Embryonic fibroblast</tissue>
    </source>
</reference>
<name>PDS5B_MOUSE</name>
<keyword id="KW-0007">Acetylation</keyword>
<keyword id="KW-0025">Alternative splicing</keyword>
<keyword id="KW-0131">Cell cycle</keyword>
<keyword id="KW-0132">Cell division</keyword>
<keyword id="KW-0498">Mitosis</keyword>
<keyword id="KW-0539">Nucleus</keyword>
<keyword id="KW-0597">Phosphoprotein</keyword>
<keyword id="KW-1185">Reference proteome</keyword>
<keyword id="KW-0677">Repeat</keyword>
<sequence>MAHSKTRTNDGKITYPPGVKEISDKISKEEMVRRLKMVVKTFMDMDQDSEEEKELYLNLALHLASDFFLKHPDKDVRLLVACCLADIFRIYAPEAPYTSPDKLKDIFMFITRQLKGLEDTKSPQFNRYFYLLENIAWVKSYNICFELEDSNEIFTQLYRTLFSVINNGHNQKVHMHMVDLMSSIICEGDTVSQELLDTVLVNLVPAHKNLNKQAYDLAKALLKRTAQAIEPYITNFFNQVLMLGKTSISDLSEHVFDLILELYNIDSHLLLSVLPQLEFKLKSNDNEERLQVVKLLAKMFGAKDSELASQNKPLWQCYLGRFNDIHVPIRLECVKFASHCLMNHPDLAKDLTEYLKVRSHDPEEAIRHDVIVSIVTAAKKDILLVNDHLLNFVRERTLDKRWRVRKEAMMGLAQIYKKYSLQSAAGKDAAKQISWVKDKLLHIYYQNSIDDRLLVERIFAQYMVPHNLETTERMKCLYYLYATLDLNAVKALNEMWKCQNLLRHQVKDLLDLIKQPKTDASVKAIFSKVMVITRNLPDPGKAQDFMKKFTQVLEDDEKIRKQLEALVSPTCSCKQAEGCVREITKKLGNPKQPTNPFLEMIKFLLERIAPVHIDTESISALIKQVNKSIDGTADDEDEGVPTDQAIRAGLELLKVLSFTHPISFHSAETFESLLACLKMDDEKVAEAALQIFKNTGSKIEEDFPHIRSALLPVLHHKSKKGPPRQAKYAIHCIHAIFSSKETQFAQIFEPLHKSLDPSNLEHLITPLVTIGHIALLAPDQFAAPLKSLVATFIVKDLLMNDRLPGKKTTKLWVPDEEVSPETMVKIQAIKMMVRWLLGMKNNHSKSGTSTLRLLTTILHSDGDLTEQGKISKPDMSRLRLAAGSAIVKLAQEPCYHEIITLEQYQLCALAINDECYQVRQVFAQKLHKGLSRLRLPLEYMAICALCAKDPVKERRAHARQCLVKNITVRREYLKQHAAVSEKLLSLLPEYVVPYTIHLLAHDPDYVKVQDIEQLKDVKECLWFVLEILMAKNENNSHAFIRKMVENIKQTKDAQGPDDTKMNEKLYTVCDVAMNIIMSKSTTYSLESPKDPVLPARFFTQPDKNFSNTKNYLPPEMKSFFTPGKPKTANVLGAVNKPLSSAGKQSQTKSSRMETVSNASSSSNPSSPGRIKGRLDSSEMDHSENEDYTMSSPLPGKKSDKREDPDLSELEKPRSRKKAPVTDPEEKLGMDDLTKLVQEQKPKGSQRGRKRGRTASDSDEQQWPEEKRHKEELLENEDEQNSPPKKGKRGRPPKPLGGGTSKEEPTMKTSKKGNKKKLVPPVVDDDEEEERQIGNTEHKSKSKQHRTSKRAQQRAESPETSAVESTQSTPQKGRGRPSKAPSPSQPPKKIRVGRSKQVATKENDSSEEMDVLQASSPVSDDTTQEGAEEEDISVGNVRRRSSKRERR</sequence>
<gene>
    <name type="primary">Pds5b</name>
    <name type="synonym">Aprin</name>
    <name evidence="9" type="synonym">As3</name>
    <name evidence="16" type="synonym">Kiaa0979</name>
</gene>
<organism>
    <name type="scientific">Mus musculus</name>
    <name type="common">Mouse</name>
    <dbReference type="NCBI Taxonomy" id="10090"/>
    <lineage>
        <taxon>Eukaryota</taxon>
        <taxon>Metazoa</taxon>
        <taxon>Chordata</taxon>
        <taxon>Craniata</taxon>
        <taxon>Vertebrata</taxon>
        <taxon>Euteleostomi</taxon>
        <taxon>Mammalia</taxon>
        <taxon>Eutheria</taxon>
        <taxon>Euarchontoglires</taxon>
        <taxon>Glires</taxon>
        <taxon>Rodentia</taxon>
        <taxon>Myomorpha</taxon>
        <taxon>Muroidea</taxon>
        <taxon>Muridae</taxon>
        <taxon>Murinae</taxon>
        <taxon>Mus</taxon>
        <taxon>Mus</taxon>
    </lineage>
</organism>